<keyword id="KW-0028">Amino-acid biosynthesis</keyword>
<keyword id="KW-0963">Cytoplasm</keyword>
<keyword id="KW-0413">Isomerase</keyword>
<keyword id="KW-0457">Lysine biosynthesis</keyword>
<keyword id="KW-1185">Reference proteome</keyword>
<evidence type="ECO:0000255" key="1">
    <source>
        <dbReference type="HAMAP-Rule" id="MF_00197"/>
    </source>
</evidence>
<organism>
    <name type="scientific">Shewanella denitrificans (strain OS217 / ATCC BAA-1090 / DSM 15013)</name>
    <dbReference type="NCBI Taxonomy" id="318161"/>
    <lineage>
        <taxon>Bacteria</taxon>
        <taxon>Pseudomonadati</taxon>
        <taxon>Pseudomonadota</taxon>
        <taxon>Gammaproteobacteria</taxon>
        <taxon>Alteromonadales</taxon>
        <taxon>Shewanellaceae</taxon>
        <taxon>Shewanella</taxon>
    </lineage>
</organism>
<gene>
    <name evidence="1" type="primary">dapF</name>
    <name type="ordered locus">Sden_0391</name>
</gene>
<sequence>MIHFTKMHGLGNDFMVVDGVTQNVFFSPEQIRRLANRNFGVGFDQLLLVEPPYDPDLDFHYRIFNADGSEVEQCGNGARCFARFVRNKGLTQKNKIRVSTSSGKMTLRLERDGSVVVNMGVPVTDPSNIPFKAKKVEKTYLLQTPVQTFLCGAISMGNPHCVIEVDDIDTVAVDEIGALLTRHERFSKGVNVGFMQIINPGHIKLRVYERGAGETLACGTGACAAAAIGQLQDKLSRQVRVDLPGGTLHIDWDGEGKPLWMTGPAEHVYDGQIQL</sequence>
<dbReference type="EC" id="5.1.1.7" evidence="1"/>
<dbReference type="EMBL" id="CP000302">
    <property type="protein sequence ID" value="ABE53686.1"/>
    <property type="molecule type" value="Genomic_DNA"/>
</dbReference>
<dbReference type="RefSeq" id="WP_011494853.1">
    <property type="nucleotide sequence ID" value="NC_007954.1"/>
</dbReference>
<dbReference type="SMR" id="Q12S90"/>
<dbReference type="STRING" id="318161.Sden_0391"/>
<dbReference type="KEGG" id="sdn:Sden_0391"/>
<dbReference type="eggNOG" id="COG0253">
    <property type="taxonomic scope" value="Bacteria"/>
</dbReference>
<dbReference type="HOGENOM" id="CLU_053306_1_1_6"/>
<dbReference type="OrthoDB" id="9805408at2"/>
<dbReference type="UniPathway" id="UPA00034">
    <property type="reaction ID" value="UER00025"/>
</dbReference>
<dbReference type="Proteomes" id="UP000001982">
    <property type="component" value="Chromosome"/>
</dbReference>
<dbReference type="GO" id="GO:0005829">
    <property type="term" value="C:cytosol"/>
    <property type="evidence" value="ECO:0007669"/>
    <property type="project" value="TreeGrafter"/>
</dbReference>
<dbReference type="GO" id="GO:0008837">
    <property type="term" value="F:diaminopimelate epimerase activity"/>
    <property type="evidence" value="ECO:0007669"/>
    <property type="project" value="UniProtKB-UniRule"/>
</dbReference>
<dbReference type="GO" id="GO:0009089">
    <property type="term" value="P:lysine biosynthetic process via diaminopimelate"/>
    <property type="evidence" value="ECO:0007669"/>
    <property type="project" value="UniProtKB-UniRule"/>
</dbReference>
<dbReference type="FunFam" id="3.10.310.10:FF:000001">
    <property type="entry name" value="Diaminopimelate epimerase"/>
    <property type="match status" value="1"/>
</dbReference>
<dbReference type="FunFam" id="3.10.310.10:FF:000002">
    <property type="entry name" value="Diaminopimelate epimerase"/>
    <property type="match status" value="1"/>
</dbReference>
<dbReference type="Gene3D" id="3.10.310.10">
    <property type="entry name" value="Diaminopimelate Epimerase, Chain A, domain 1"/>
    <property type="match status" value="2"/>
</dbReference>
<dbReference type="HAMAP" id="MF_00197">
    <property type="entry name" value="DAP_epimerase"/>
    <property type="match status" value="1"/>
</dbReference>
<dbReference type="InterPro" id="IPR018510">
    <property type="entry name" value="DAP_epimerase_AS"/>
</dbReference>
<dbReference type="InterPro" id="IPR001653">
    <property type="entry name" value="DAP_epimerase_DapF"/>
</dbReference>
<dbReference type="NCBIfam" id="TIGR00652">
    <property type="entry name" value="DapF"/>
    <property type="match status" value="1"/>
</dbReference>
<dbReference type="PANTHER" id="PTHR31689:SF0">
    <property type="entry name" value="DIAMINOPIMELATE EPIMERASE"/>
    <property type="match status" value="1"/>
</dbReference>
<dbReference type="PANTHER" id="PTHR31689">
    <property type="entry name" value="DIAMINOPIMELATE EPIMERASE, CHLOROPLASTIC"/>
    <property type="match status" value="1"/>
</dbReference>
<dbReference type="Pfam" id="PF01678">
    <property type="entry name" value="DAP_epimerase"/>
    <property type="match status" value="2"/>
</dbReference>
<dbReference type="SUPFAM" id="SSF54506">
    <property type="entry name" value="Diaminopimelate epimerase-like"/>
    <property type="match status" value="1"/>
</dbReference>
<dbReference type="PROSITE" id="PS01326">
    <property type="entry name" value="DAP_EPIMERASE"/>
    <property type="match status" value="1"/>
</dbReference>
<comment type="function">
    <text evidence="1">Catalyzes the stereoinversion of LL-2,6-diaminopimelate (L,L-DAP) to meso-diaminopimelate (meso-DAP), a precursor of L-lysine and an essential component of the bacterial peptidoglycan.</text>
</comment>
<comment type="catalytic activity">
    <reaction evidence="1">
        <text>(2S,6S)-2,6-diaminopimelate = meso-2,6-diaminopimelate</text>
        <dbReference type="Rhea" id="RHEA:15393"/>
        <dbReference type="ChEBI" id="CHEBI:57609"/>
        <dbReference type="ChEBI" id="CHEBI:57791"/>
        <dbReference type="EC" id="5.1.1.7"/>
    </reaction>
</comment>
<comment type="pathway">
    <text evidence="1">Amino-acid biosynthesis; L-lysine biosynthesis via DAP pathway; DL-2,6-diaminopimelate from LL-2,6-diaminopimelate: step 1/1.</text>
</comment>
<comment type="subunit">
    <text evidence="1">Homodimer.</text>
</comment>
<comment type="subcellular location">
    <subcellularLocation>
        <location evidence="1">Cytoplasm</location>
    </subcellularLocation>
</comment>
<comment type="similarity">
    <text evidence="1">Belongs to the diaminopimelate epimerase family.</text>
</comment>
<name>DAPF_SHEDO</name>
<reference key="1">
    <citation type="submission" date="2006-03" db="EMBL/GenBank/DDBJ databases">
        <title>Complete sequence of Shewanella denitrificans OS217.</title>
        <authorList>
            <consortium name="US DOE Joint Genome Institute"/>
            <person name="Copeland A."/>
            <person name="Lucas S."/>
            <person name="Lapidus A."/>
            <person name="Barry K."/>
            <person name="Detter J.C."/>
            <person name="Glavina del Rio T."/>
            <person name="Hammon N."/>
            <person name="Israni S."/>
            <person name="Dalin E."/>
            <person name="Tice H."/>
            <person name="Pitluck S."/>
            <person name="Brettin T."/>
            <person name="Bruce D."/>
            <person name="Han C."/>
            <person name="Tapia R."/>
            <person name="Gilna P."/>
            <person name="Kiss H."/>
            <person name="Schmutz J."/>
            <person name="Larimer F."/>
            <person name="Land M."/>
            <person name="Hauser L."/>
            <person name="Kyrpides N."/>
            <person name="Lykidis A."/>
            <person name="Richardson P."/>
        </authorList>
    </citation>
    <scope>NUCLEOTIDE SEQUENCE [LARGE SCALE GENOMIC DNA]</scope>
    <source>
        <strain>OS217 / ATCC BAA-1090 / DSM 15013</strain>
    </source>
</reference>
<protein>
    <recommendedName>
        <fullName evidence="1">Diaminopimelate epimerase</fullName>
        <shortName evidence="1">DAP epimerase</shortName>
        <ecNumber evidence="1">5.1.1.7</ecNumber>
    </recommendedName>
    <alternativeName>
        <fullName evidence="1">PLP-independent amino acid racemase</fullName>
    </alternativeName>
</protein>
<feature type="chain" id="PRO_1000011962" description="Diaminopimelate epimerase">
    <location>
        <begin position="1"/>
        <end position="275"/>
    </location>
</feature>
<feature type="active site" description="Proton donor" evidence="1">
    <location>
        <position position="74"/>
    </location>
</feature>
<feature type="active site" description="Proton acceptor" evidence="1">
    <location>
        <position position="218"/>
    </location>
</feature>
<feature type="binding site" evidence="1">
    <location>
        <position position="12"/>
    </location>
    <ligand>
        <name>substrate</name>
    </ligand>
</feature>
<feature type="binding site" evidence="1">
    <location>
        <position position="45"/>
    </location>
    <ligand>
        <name>substrate</name>
    </ligand>
</feature>
<feature type="binding site" evidence="1">
    <location>
        <position position="65"/>
    </location>
    <ligand>
        <name>substrate</name>
    </ligand>
</feature>
<feature type="binding site" evidence="1">
    <location>
        <begin position="75"/>
        <end position="76"/>
    </location>
    <ligand>
        <name>substrate</name>
    </ligand>
</feature>
<feature type="binding site" evidence="1">
    <location>
        <position position="158"/>
    </location>
    <ligand>
        <name>substrate</name>
    </ligand>
</feature>
<feature type="binding site" evidence="1">
    <location>
        <position position="191"/>
    </location>
    <ligand>
        <name>substrate</name>
    </ligand>
</feature>
<feature type="binding site" evidence="1">
    <location>
        <begin position="209"/>
        <end position="210"/>
    </location>
    <ligand>
        <name>substrate</name>
    </ligand>
</feature>
<feature type="binding site" evidence="1">
    <location>
        <begin position="219"/>
        <end position="220"/>
    </location>
    <ligand>
        <name>substrate</name>
    </ligand>
</feature>
<feature type="site" description="Could be important to modulate the pK values of the two catalytic cysteine residues" evidence="1">
    <location>
        <position position="160"/>
    </location>
</feature>
<feature type="site" description="Could be important to modulate the pK values of the two catalytic cysteine residues" evidence="1">
    <location>
        <position position="209"/>
    </location>
</feature>
<feature type="site" description="Important for dimerization" evidence="1">
    <location>
        <position position="269"/>
    </location>
</feature>
<proteinExistence type="inferred from homology"/>
<accession>Q12S90</accession>